<comment type="function">
    <text evidence="1">Attaches the virion to the host cell membrane by interacting with heparan sulfate, initiating the infection. Interacts with host CX3CR1, the receptor for the CX3C chemokine fractalkine, to modulate the immune response and facilitate infection. Unlike the other paramyxovirus attachment proteins, lacks both neuraminidase and hemagglutinating activities (By similarity).</text>
</comment>
<comment type="function">
    <text evidence="1">Secreted glycoprotein G helps RSV escape antibody-dependent restriction of replication by acting as an antigen decoy and by modulating the activity of leukocytes bearing Fcgamma receptors.</text>
</comment>
<comment type="subunit">
    <text evidence="1">Homooligomer. Interacts (via N-terminus) with protein M. Interacts with protein F; this interaction occurs on the surface of infected cells. Interacts with protein SH. Interacts with host CX3CR1; this interaction modulates host immune response (By similarity).</text>
</comment>
<comment type="subcellular location">
    <subcellularLocation>
        <location>Virion membrane</location>
    </subcellularLocation>
    <subcellularLocation>
        <location evidence="1">Host cell surface</location>
    </subcellularLocation>
</comment>
<comment type="subcellular location">
    <molecule>Isoform Secreted glycoprotein G</molecule>
    <subcellularLocation>
        <location>Secreted</location>
    </subcellularLocation>
</comment>
<comment type="alternative products">
    <event type="alternative initiation"/>
    <isoform>
        <id>Q86695-1</id>
        <name>Membrane-bound glycoprotein G</name>
        <sequence type="displayed"/>
    </isoform>
    <isoform>
        <id>Q86695-2</id>
        <name>Secreted glycoprotein G</name>
        <sequence type="described" ref="VSP_036521"/>
    </isoform>
</comment>
<comment type="domain">
    <text>Contains a linear heparin binding domain essential for virus attachment to the host.</text>
</comment>
<comment type="PTM">
    <text evidence="1">May carry a lot of separate O-linked carbohydrate chains distributed among serine and threonine residues.</text>
</comment>
<comment type="PTM">
    <text evidence="1">Palmitoylated.</text>
</comment>
<comment type="similarity">
    <text evidence="4">Belongs to the pneumoviruses glycoprotein G family.</text>
</comment>
<proteinExistence type="inferred from homology"/>
<protein>
    <recommendedName>
        <fullName>Major surface glycoprotein G</fullName>
    </recommendedName>
    <alternativeName>
        <fullName>Attachment glycoprotein G</fullName>
    </alternativeName>
</protein>
<gene>
    <name type="primary">G</name>
</gene>
<dbReference type="EMBL" id="AH004456">
    <property type="protein sequence ID" value="AAB29551.1"/>
    <property type="molecule type" value="Genomic_RNA"/>
</dbReference>
<dbReference type="PIR" id="JQ2388">
    <property type="entry name" value="JQ2388"/>
</dbReference>
<dbReference type="GlyCosmos" id="Q86695">
    <property type="glycosylation" value="4 sites, No reported glycans"/>
</dbReference>
<dbReference type="GO" id="GO:0005576">
    <property type="term" value="C:extracellular region"/>
    <property type="evidence" value="ECO:0007669"/>
    <property type="project" value="UniProtKB-SubCell"/>
</dbReference>
<dbReference type="GO" id="GO:0044228">
    <property type="term" value="C:host cell surface"/>
    <property type="evidence" value="ECO:0007669"/>
    <property type="project" value="UniProtKB-SubCell"/>
</dbReference>
<dbReference type="GO" id="GO:0016020">
    <property type="term" value="C:membrane"/>
    <property type="evidence" value="ECO:0007669"/>
    <property type="project" value="UniProtKB-KW"/>
</dbReference>
<dbReference type="GO" id="GO:0055036">
    <property type="term" value="C:virion membrane"/>
    <property type="evidence" value="ECO:0007669"/>
    <property type="project" value="UniProtKB-SubCell"/>
</dbReference>
<dbReference type="GO" id="GO:0046718">
    <property type="term" value="P:symbiont entry into host cell"/>
    <property type="evidence" value="ECO:0007669"/>
    <property type="project" value="UniProtKB-KW"/>
</dbReference>
<dbReference type="GO" id="GO:0019062">
    <property type="term" value="P:virion attachment to host cell"/>
    <property type="evidence" value="ECO:0007669"/>
    <property type="project" value="UniProtKB-KW"/>
</dbReference>
<dbReference type="InterPro" id="IPR000925">
    <property type="entry name" value="G_prot"/>
</dbReference>
<dbReference type="Pfam" id="PF00802">
    <property type="entry name" value="Glycoprotein_G"/>
    <property type="match status" value="1"/>
</dbReference>
<keyword id="KW-0024">Alternative initiation</keyword>
<keyword id="KW-1015">Disulfide bond</keyword>
<keyword id="KW-0325">Glycoprotein</keyword>
<keyword id="KW-0945">Host-virus interaction</keyword>
<keyword id="KW-0472">Membrane</keyword>
<keyword id="KW-0964">Secreted</keyword>
<keyword id="KW-0812">Transmembrane</keyword>
<keyword id="KW-1133">Transmembrane helix</keyword>
<keyword id="KW-1161">Viral attachment to host cell</keyword>
<keyword id="KW-0899">Viral immunoevasion</keyword>
<keyword id="KW-0946">Virion</keyword>
<keyword id="KW-1160">Virus entry into host cell</keyword>
<name>GLYC_ORSVW</name>
<evidence type="ECO:0000250" key="1"/>
<evidence type="ECO:0000255" key="2"/>
<evidence type="ECO:0000256" key="3">
    <source>
        <dbReference type="SAM" id="MobiDB-lite"/>
    </source>
</evidence>
<evidence type="ECO:0000305" key="4"/>
<organism>
    <name type="scientific">Ovine respiratory syncytial virus (strain WSU 83-1578)</name>
    <name type="common">ORSV</name>
    <dbReference type="NCBI Taxonomy" id="79699"/>
    <lineage>
        <taxon>Viruses</taxon>
        <taxon>Riboviria</taxon>
        <taxon>Orthornavirae</taxon>
        <taxon>Negarnaviricota</taxon>
        <taxon>Haploviricotina</taxon>
        <taxon>Monjiviricetes</taxon>
        <taxon>Mononegavirales</taxon>
        <taxon>Pneumoviridae</taxon>
        <taxon>Ovine respiratory syncytial virus</taxon>
    </lineage>
</organism>
<accession>Q86695</accession>
<reference key="1">
    <citation type="journal article" date="1993" name="J. Gen. Virol.">
        <title>Analysis of the ovine respiratory syncytial virus (RSV) G glycoprotein gene defines a subgroup of ungulate RSV.</title>
        <authorList>
            <person name="Mallipeddi S.K."/>
            <person name="Samal S.K."/>
        </authorList>
    </citation>
    <scope>NUCLEOTIDE SEQUENCE [GENOMIC RNA]</scope>
</reference>
<organismHost>
    <name type="scientific">Ovis aries</name>
    <name type="common">Sheep</name>
    <dbReference type="NCBI Taxonomy" id="9940"/>
</organismHost>
<sequence>MSNHTHHFEFKTLKKAWKASKYFIVGLSCLYKLNLKSLVQMALSALAMITLVSLTITAIIYISTGNTKAKPMPTPTIQITQQFQNHTSLPPTEHNHNSTHSPTQGTTSPHTFAVDVTEGTRYYHLTLKTQGGKTKGPPTPHATRKPPISSQKSNPSEIQQDYSDFQILPYVPCNICEGDSACLSLCQDRSESILDKALTTTPKKTPKPMTTKKPTKTSTHHRTSLRNKLYIKTNMTTPPHGLISTAKHNKNQSTVQNPRHTLA</sequence>
<feature type="chain" id="PRO_0000142853" description="Major surface glycoprotein G">
    <location>
        <begin position="1"/>
        <end position="263"/>
    </location>
</feature>
<feature type="topological domain" description="Intravirion" evidence="2">
    <location>
        <begin position="1"/>
        <end position="37"/>
    </location>
</feature>
<feature type="transmembrane region" description="Helical" evidence="2">
    <location>
        <begin position="38"/>
        <end position="66"/>
    </location>
</feature>
<feature type="topological domain" description="Virion surface" evidence="2">
    <location>
        <begin position="67"/>
        <end position="263"/>
    </location>
</feature>
<feature type="region of interest" description="Disordered" evidence="3">
    <location>
        <begin position="87"/>
        <end position="111"/>
    </location>
</feature>
<feature type="region of interest" description="Disordered" evidence="3">
    <location>
        <begin position="127"/>
        <end position="158"/>
    </location>
</feature>
<feature type="region of interest" description="Disordered" evidence="3">
    <location>
        <begin position="200"/>
        <end position="223"/>
    </location>
</feature>
<feature type="region of interest" description="Disordered" evidence="3">
    <location>
        <begin position="238"/>
        <end position="263"/>
    </location>
</feature>
<feature type="compositionally biased region" description="Polar residues" evidence="3">
    <location>
        <begin position="98"/>
        <end position="110"/>
    </location>
</feature>
<feature type="compositionally biased region" description="Polar residues" evidence="3">
    <location>
        <begin position="148"/>
        <end position="158"/>
    </location>
</feature>
<feature type="compositionally biased region" description="Low complexity" evidence="3">
    <location>
        <begin position="200"/>
        <end position="212"/>
    </location>
</feature>
<feature type="compositionally biased region" description="Basic residues" evidence="3">
    <location>
        <begin position="213"/>
        <end position="223"/>
    </location>
</feature>
<feature type="compositionally biased region" description="Polar residues" evidence="3">
    <location>
        <begin position="251"/>
        <end position="263"/>
    </location>
</feature>
<feature type="glycosylation site" description="N-linked (GlcNAc...) asparagine; by host" evidence="2">
    <location>
        <position position="85"/>
    </location>
</feature>
<feature type="glycosylation site" description="N-linked (GlcNAc...) asparagine; by host" evidence="2">
    <location>
        <position position="97"/>
    </location>
</feature>
<feature type="glycosylation site" description="N-linked (GlcNAc...) asparagine; by host" evidence="2">
    <location>
        <position position="234"/>
    </location>
</feature>
<feature type="glycosylation site" description="N-linked (GlcNAc...) asparagine; by host" evidence="2">
    <location>
        <position position="251"/>
    </location>
</feature>
<feature type="disulfide bond" evidence="1">
    <location>
        <begin position="173"/>
        <end position="186"/>
    </location>
</feature>
<feature type="disulfide bond" evidence="1">
    <location>
        <begin position="176"/>
        <end position="182"/>
    </location>
</feature>
<feature type="splice variant" id="VSP_036521" description="In isoform Secreted glycoprotein G." evidence="4">
    <location>
        <begin position="1"/>
        <end position="47"/>
    </location>
</feature>